<comment type="function">
    <text evidence="3">Odorant receptor.</text>
</comment>
<comment type="subcellular location">
    <subcellularLocation>
        <location>Cell membrane</location>
        <topology>Multi-pass membrane protein</topology>
    </subcellularLocation>
</comment>
<comment type="similarity">
    <text evidence="2">Belongs to the G-protein coupled receptor 1 family.</text>
</comment>
<comment type="online information" name="Human Olfactory Receptor Data Exploratorium (HORDE)">
    <link uri="http://genome.weizmann.ac.il/horde/card/index/symbol:OR4L1"/>
</comment>
<accession>Q8NH43</accession>
<accession>Q6IEZ5</accession>
<reference key="1">
    <citation type="submission" date="2001-07" db="EMBL/GenBank/DDBJ databases">
        <title>Genome-wide discovery and analysis of human seven transmembrane helix receptor genes.</title>
        <authorList>
            <person name="Suwa M."/>
            <person name="Sato T."/>
            <person name="Okouchi I."/>
            <person name="Arita M."/>
            <person name="Futami K."/>
            <person name="Matsumoto S."/>
            <person name="Tsutsumi S."/>
            <person name="Aburatani H."/>
            <person name="Asai K."/>
            <person name="Akiyama Y."/>
        </authorList>
    </citation>
    <scope>NUCLEOTIDE SEQUENCE [GENOMIC DNA]</scope>
</reference>
<reference key="2">
    <citation type="journal article" date="2004" name="Proc. Natl. Acad. Sci. U.S.A.">
        <title>The human olfactory receptor gene family.</title>
        <authorList>
            <person name="Malnic B."/>
            <person name="Godfrey P.A."/>
            <person name="Buck L.B."/>
        </authorList>
    </citation>
    <scope>IDENTIFICATION</scope>
</reference>
<reference key="3">
    <citation type="journal article" date="2004" name="Proc. Natl. Acad. Sci. U.S.A.">
        <authorList>
            <person name="Malnic B."/>
            <person name="Godfrey P.A."/>
            <person name="Buck L.B."/>
        </authorList>
    </citation>
    <scope>ERRATUM OF PUBMED:14983052</scope>
</reference>
<dbReference type="EMBL" id="AB065558">
    <property type="protein sequence ID" value="BAC05796.1"/>
    <property type="molecule type" value="Genomic_DNA"/>
</dbReference>
<dbReference type="EMBL" id="BK004467">
    <property type="protein sequence ID" value="DAA04865.1"/>
    <property type="molecule type" value="Genomic_DNA"/>
</dbReference>
<dbReference type="CCDS" id="CCDS32029.1"/>
<dbReference type="RefSeq" id="NP_001004717.1">
    <property type="nucleotide sequence ID" value="NM_001004717.1"/>
</dbReference>
<dbReference type="SMR" id="Q8NH43"/>
<dbReference type="BioGRID" id="125791">
    <property type="interactions" value="1"/>
</dbReference>
<dbReference type="FunCoup" id="Q8NH43">
    <property type="interactions" value="462"/>
</dbReference>
<dbReference type="STRING" id="9606.ENSP00000319217"/>
<dbReference type="GlyCosmos" id="Q8NH43">
    <property type="glycosylation" value="2 sites, No reported glycans"/>
</dbReference>
<dbReference type="GlyGen" id="Q8NH43">
    <property type="glycosylation" value="2 sites"/>
</dbReference>
<dbReference type="iPTMnet" id="Q8NH43"/>
<dbReference type="PhosphoSitePlus" id="Q8NH43"/>
<dbReference type="BioMuta" id="OR4L1"/>
<dbReference type="DMDM" id="38372806"/>
<dbReference type="PaxDb" id="9606-ENSP00000319217"/>
<dbReference type="TopDownProteomics" id="Q8NH43"/>
<dbReference type="Antibodypedia" id="57317">
    <property type="antibodies" value="106 antibodies from 20 providers"/>
</dbReference>
<dbReference type="DNASU" id="122742"/>
<dbReference type="Ensembl" id="ENST00000315683.1">
    <property type="protein sequence ID" value="ENSP00000319217.1"/>
    <property type="gene ID" value="ENSG00000176246.1"/>
</dbReference>
<dbReference type="Ensembl" id="ENST00000708719.1">
    <property type="protein sequence ID" value="ENSP00000517305.1"/>
    <property type="gene ID" value="ENSG00000291772.1"/>
</dbReference>
<dbReference type="GeneID" id="122742"/>
<dbReference type="KEGG" id="hsa:122742"/>
<dbReference type="MANE-Select" id="ENST00000315683.1">
    <property type="protein sequence ID" value="ENSP00000319217.1"/>
    <property type="RefSeq nucleotide sequence ID" value="NM_001004717.1"/>
    <property type="RefSeq protein sequence ID" value="NP_001004717.1"/>
</dbReference>
<dbReference type="UCSC" id="uc001vwn.1">
    <property type="organism name" value="human"/>
</dbReference>
<dbReference type="AGR" id="HGNC:15356"/>
<dbReference type="CTD" id="122742"/>
<dbReference type="GeneCards" id="OR4L1"/>
<dbReference type="HGNC" id="HGNC:15356">
    <property type="gene designation" value="OR4L1"/>
</dbReference>
<dbReference type="HPA" id="ENSG00000176246">
    <property type="expression patterns" value="Not detected"/>
</dbReference>
<dbReference type="neXtProt" id="NX_Q8NH43"/>
<dbReference type="PharmGKB" id="PA32325"/>
<dbReference type="VEuPathDB" id="HostDB:ENSG00000176246"/>
<dbReference type="eggNOG" id="ENOG502TDFF">
    <property type="taxonomic scope" value="Eukaryota"/>
</dbReference>
<dbReference type="GeneTree" id="ENSGT00940000163035"/>
<dbReference type="HOGENOM" id="CLU_012526_8_2_1"/>
<dbReference type="InParanoid" id="Q8NH43"/>
<dbReference type="OMA" id="MQGAMRK"/>
<dbReference type="OrthoDB" id="6147321at2759"/>
<dbReference type="PAN-GO" id="Q8NH43">
    <property type="GO annotations" value="2 GO annotations based on evolutionary models"/>
</dbReference>
<dbReference type="PhylomeDB" id="Q8NH43"/>
<dbReference type="TreeFam" id="TF336512"/>
<dbReference type="PathwayCommons" id="Q8NH43"/>
<dbReference type="Reactome" id="R-HSA-381753">
    <property type="pathway name" value="Olfactory Signaling Pathway"/>
</dbReference>
<dbReference type="Reactome" id="R-HSA-9752946">
    <property type="pathway name" value="Expression and translocation of olfactory receptors"/>
</dbReference>
<dbReference type="BioGRID-ORCS" id="122742">
    <property type="hits" value="9 hits in 739 CRISPR screens"/>
</dbReference>
<dbReference type="GeneWiki" id="OR4L1"/>
<dbReference type="GenomeRNAi" id="122742"/>
<dbReference type="Pharos" id="Q8NH43">
    <property type="development level" value="Tdark"/>
</dbReference>
<dbReference type="PRO" id="PR:Q8NH43"/>
<dbReference type="Proteomes" id="UP000005640">
    <property type="component" value="Chromosome 14"/>
</dbReference>
<dbReference type="RNAct" id="Q8NH43">
    <property type="molecule type" value="protein"/>
</dbReference>
<dbReference type="Bgee" id="ENSG00000176246">
    <property type="expression patterns" value="Expressed in male germ line stem cell (sensu Vertebrata) in testis and 1 other cell type or tissue"/>
</dbReference>
<dbReference type="GO" id="GO:0005886">
    <property type="term" value="C:plasma membrane"/>
    <property type="evidence" value="ECO:0000304"/>
    <property type="project" value="Reactome"/>
</dbReference>
<dbReference type="GO" id="GO:0004930">
    <property type="term" value="F:G protein-coupled receptor activity"/>
    <property type="evidence" value="ECO:0007669"/>
    <property type="project" value="UniProtKB-KW"/>
</dbReference>
<dbReference type="GO" id="GO:0004984">
    <property type="term" value="F:olfactory receptor activity"/>
    <property type="evidence" value="ECO:0000318"/>
    <property type="project" value="GO_Central"/>
</dbReference>
<dbReference type="CDD" id="cd15226">
    <property type="entry name" value="7tmA_OR4-like"/>
    <property type="match status" value="1"/>
</dbReference>
<dbReference type="FunFam" id="1.10.1220.70:FF:000001">
    <property type="entry name" value="Olfactory receptor"/>
    <property type="match status" value="1"/>
</dbReference>
<dbReference type="FunFam" id="1.20.1070.10:FF:000012">
    <property type="entry name" value="Olfactory receptor"/>
    <property type="match status" value="1"/>
</dbReference>
<dbReference type="Gene3D" id="1.20.1070.10">
    <property type="entry name" value="Rhodopsin 7-helix transmembrane proteins"/>
    <property type="match status" value="1"/>
</dbReference>
<dbReference type="InterPro" id="IPR000276">
    <property type="entry name" value="GPCR_Rhodpsn"/>
</dbReference>
<dbReference type="InterPro" id="IPR017452">
    <property type="entry name" value="GPCR_Rhodpsn_7TM"/>
</dbReference>
<dbReference type="InterPro" id="IPR000725">
    <property type="entry name" value="Olfact_rcpt"/>
</dbReference>
<dbReference type="InterPro" id="IPR050427">
    <property type="entry name" value="Olfactory_Receptors"/>
</dbReference>
<dbReference type="PANTHER" id="PTHR48002">
    <property type="entry name" value="OLFACTORY RECEPTOR"/>
    <property type="match status" value="1"/>
</dbReference>
<dbReference type="Pfam" id="PF13853">
    <property type="entry name" value="7tm_4"/>
    <property type="match status" value="1"/>
</dbReference>
<dbReference type="PRINTS" id="PR00237">
    <property type="entry name" value="GPCRRHODOPSN"/>
</dbReference>
<dbReference type="PRINTS" id="PR00245">
    <property type="entry name" value="OLFACTORYR"/>
</dbReference>
<dbReference type="SUPFAM" id="SSF81321">
    <property type="entry name" value="Family A G protein-coupled receptor-like"/>
    <property type="match status" value="1"/>
</dbReference>
<dbReference type="PROSITE" id="PS00237">
    <property type="entry name" value="G_PROTEIN_RECEP_F1_1"/>
    <property type="match status" value="1"/>
</dbReference>
<dbReference type="PROSITE" id="PS50262">
    <property type="entry name" value="G_PROTEIN_RECEP_F1_2"/>
    <property type="match status" value="1"/>
</dbReference>
<sequence>MDLKNGSLVTEFILLGFFGRWELQIFFFVTFSLIYGATVMGNILIMVTVTCRSTLHSPLYFLLGNLSFLDMCLSTATTPKMIIDLLTDHKTISVWGCVTQMFFMHFFGGAEMTLLIIMAFDRYVAICKPLHYRTIMSHKLLKGFAILSWIIGFLHSISQIVLTMNLPFCGHNVINNIFCDLPLVIKLACIETYTLELFVIADSGLLSFTCFILLLVSYIVILVSVPKKSSHGLSKALSTLSAHIIVVTLFFGPCIFIYVWPFSSLASNKTLAVFYTVITPLLNPSIYTLRNKKMQEAIRKLRFQYVSSAQNF</sequence>
<feature type="chain" id="PRO_0000150560" description="Olfactory receptor 4L1">
    <location>
        <begin position="1"/>
        <end position="312"/>
    </location>
</feature>
<feature type="topological domain" description="Extracellular" evidence="1">
    <location>
        <begin position="1"/>
        <end position="25"/>
    </location>
</feature>
<feature type="transmembrane region" description="Helical; Name=1" evidence="1">
    <location>
        <begin position="26"/>
        <end position="49"/>
    </location>
</feature>
<feature type="topological domain" description="Cytoplasmic" evidence="1">
    <location>
        <begin position="50"/>
        <end position="57"/>
    </location>
</feature>
<feature type="transmembrane region" description="Helical; Name=2" evidence="1">
    <location>
        <begin position="58"/>
        <end position="79"/>
    </location>
</feature>
<feature type="topological domain" description="Extracellular" evidence="1">
    <location>
        <begin position="80"/>
        <end position="100"/>
    </location>
</feature>
<feature type="transmembrane region" description="Helical; Name=3" evidence="1">
    <location>
        <begin position="101"/>
        <end position="120"/>
    </location>
</feature>
<feature type="topological domain" description="Cytoplasmic" evidence="1">
    <location>
        <begin position="121"/>
        <end position="139"/>
    </location>
</feature>
<feature type="transmembrane region" description="Helical; Name=4" evidence="1">
    <location>
        <begin position="140"/>
        <end position="158"/>
    </location>
</feature>
<feature type="topological domain" description="Extracellular" evidence="1">
    <location>
        <begin position="159"/>
        <end position="195"/>
    </location>
</feature>
<feature type="transmembrane region" description="Helical; Name=5" evidence="1">
    <location>
        <begin position="196"/>
        <end position="219"/>
    </location>
</feature>
<feature type="topological domain" description="Cytoplasmic" evidence="1">
    <location>
        <begin position="220"/>
        <end position="235"/>
    </location>
</feature>
<feature type="transmembrane region" description="Helical; Name=6" evidence="1">
    <location>
        <begin position="236"/>
        <end position="258"/>
    </location>
</feature>
<feature type="topological domain" description="Extracellular" evidence="1">
    <location>
        <begin position="259"/>
        <end position="269"/>
    </location>
</feature>
<feature type="transmembrane region" description="Helical; Name=7" evidence="1">
    <location>
        <begin position="270"/>
        <end position="289"/>
    </location>
</feature>
<feature type="topological domain" description="Cytoplasmic" evidence="1">
    <location>
        <begin position="290"/>
        <end position="312"/>
    </location>
</feature>
<feature type="glycosylation site" description="N-linked (GlcNAc...) asparagine" evidence="1">
    <location>
        <position position="5"/>
    </location>
</feature>
<feature type="glycosylation site" description="N-linked (GlcNAc...) asparagine" evidence="1">
    <location>
        <position position="268"/>
    </location>
</feature>
<feature type="disulfide bond" evidence="2">
    <location>
        <begin position="97"/>
        <end position="189"/>
    </location>
</feature>
<feature type="sequence variant" id="VAR_034201" description="In dbSNP:rs1958715.">
    <original>D</original>
    <variation>N</variation>
    <location>
        <position position="2"/>
    </location>
</feature>
<feature type="sequence variant" id="VAR_062036" description="In dbSNP:rs45584133.">
    <original>G</original>
    <variation>V</variation>
    <location>
        <position position="16"/>
    </location>
</feature>
<feature type="sequence variant" id="VAR_034202" description="In dbSNP:rs1958716.">
    <original>M</original>
    <variation>V</variation>
    <location>
        <position position="40"/>
    </location>
</feature>
<feature type="sequence variant" id="VAR_024094" description="In dbSNP:rs1959630.">
    <original>R</original>
    <variation>S</variation>
    <location>
        <position position="52"/>
    </location>
</feature>
<feature type="sequence variant" id="VAR_034203" description="In dbSNP:rs10139756.">
    <original>S</original>
    <variation>F</variation>
    <location>
        <position position="93"/>
    </location>
</feature>
<feature type="sequence variant" id="VAR_034204" description="In dbSNP:rs2775253.">
    <original>M</original>
    <variation>K</variation>
    <location>
        <position position="101"/>
    </location>
</feature>
<feature type="sequence variant" id="VAR_034205" description="In dbSNP:rs2775254.">
    <original>G</original>
    <variation>S</variation>
    <location>
        <position position="109"/>
    </location>
</feature>
<feature type="sequence variant" id="VAR_062037" description="In dbSNP:rs45585336.">
    <original>I</original>
    <variation>T</variation>
    <location>
        <position position="160"/>
    </location>
</feature>
<organism>
    <name type="scientific">Homo sapiens</name>
    <name type="common">Human</name>
    <dbReference type="NCBI Taxonomy" id="9606"/>
    <lineage>
        <taxon>Eukaryota</taxon>
        <taxon>Metazoa</taxon>
        <taxon>Chordata</taxon>
        <taxon>Craniata</taxon>
        <taxon>Vertebrata</taxon>
        <taxon>Euteleostomi</taxon>
        <taxon>Mammalia</taxon>
        <taxon>Eutheria</taxon>
        <taxon>Euarchontoglires</taxon>
        <taxon>Primates</taxon>
        <taxon>Haplorrhini</taxon>
        <taxon>Catarrhini</taxon>
        <taxon>Hominidae</taxon>
        <taxon>Homo</taxon>
    </lineage>
</organism>
<protein>
    <recommendedName>
        <fullName>Olfactory receptor 4L1</fullName>
    </recommendedName>
    <alternativeName>
        <fullName>Olfactory receptor 4L2</fullName>
    </alternativeName>
    <alternativeName>
        <fullName>Olfactory receptor OR14-28</fullName>
    </alternativeName>
</protein>
<evidence type="ECO:0000255" key="1"/>
<evidence type="ECO:0000255" key="2">
    <source>
        <dbReference type="PROSITE-ProRule" id="PRU00521"/>
    </source>
</evidence>
<evidence type="ECO:0000305" key="3"/>
<gene>
    <name type="primary">OR4L1</name>
    <name type="synonym">OR4L2P</name>
</gene>
<keyword id="KW-1003">Cell membrane</keyword>
<keyword id="KW-1015">Disulfide bond</keyword>
<keyword id="KW-0297">G-protein coupled receptor</keyword>
<keyword id="KW-0325">Glycoprotein</keyword>
<keyword id="KW-0472">Membrane</keyword>
<keyword id="KW-0552">Olfaction</keyword>
<keyword id="KW-0675">Receptor</keyword>
<keyword id="KW-1185">Reference proteome</keyword>
<keyword id="KW-0716">Sensory transduction</keyword>
<keyword id="KW-0807">Transducer</keyword>
<keyword id="KW-0812">Transmembrane</keyword>
<keyword id="KW-1133">Transmembrane helix</keyword>
<name>OR4L1_HUMAN</name>
<proteinExistence type="inferred from homology"/>